<dbReference type="EC" id="1.1.5.4" evidence="1"/>
<dbReference type="EMBL" id="CP000029">
    <property type="protein sequence ID" value="AAW52837.1"/>
    <property type="molecule type" value="Genomic_DNA"/>
</dbReference>
<dbReference type="SMR" id="Q5HLN0"/>
<dbReference type="STRING" id="176279.SERP1955"/>
<dbReference type="KEGG" id="ser:SERP1955"/>
<dbReference type="eggNOG" id="COG0579">
    <property type="taxonomic scope" value="Bacteria"/>
</dbReference>
<dbReference type="HOGENOM" id="CLU_028151_0_0_9"/>
<dbReference type="UniPathway" id="UPA00223">
    <property type="reaction ID" value="UER01008"/>
</dbReference>
<dbReference type="Proteomes" id="UP000000531">
    <property type="component" value="Chromosome"/>
</dbReference>
<dbReference type="GO" id="GO:0047545">
    <property type="term" value="F:2-hydroxyglutarate dehydrogenase activity"/>
    <property type="evidence" value="ECO:0007669"/>
    <property type="project" value="TreeGrafter"/>
</dbReference>
<dbReference type="GO" id="GO:0008924">
    <property type="term" value="F:L-malate dehydrogenase (quinone) activity"/>
    <property type="evidence" value="ECO:0007669"/>
    <property type="project" value="UniProtKB-UniRule"/>
</dbReference>
<dbReference type="GO" id="GO:0006099">
    <property type="term" value="P:tricarboxylic acid cycle"/>
    <property type="evidence" value="ECO:0007669"/>
    <property type="project" value="UniProtKB-UniRule"/>
</dbReference>
<dbReference type="Gene3D" id="3.30.9.10">
    <property type="entry name" value="D-Amino Acid Oxidase, subunit A, domain 2"/>
    <property type="match status" value="1"/>
</dbReference>
<dbReference type="Gene3D" id="3.50.50.60">
    <property type="entry name" value="FAD/NAD(P)-binding domain"/>
    <property type="match status" value="1"/>
</dbReference>
<dbReference type="HAMAP" id="MF_00212">
    <property type="entry name" value="MQO"/>
    <property type="match status" value="1"/>
</dbReference>
<dbReference type="InterPro" id="IPR036188">
    <property type="entry name" value="FAD/NAD-bd_sf"/>
</dbReference>
<dbReference type="InterPro" id="IPR006231">
    <property type="entry name" value="MQO"/>
</dbReference>
<dbReference type="NCBIfam" id="TIGR01320">
    <property type="entry name" value="mal_quin_oxido"/>
    <property type="match status" value="1"/>
</dbReference>
<dbReference type="NCBIfam" id="NF003603">
    <property type="entry name" value="PRK05257.1-1"/>
    <property type="match status" value="1"/>
</dbReference>
<dbReference type="NCBIfam" id="NF003604">
    <property type="entry name" value="PRK05257.1-3"/>
    <property type="match status" value="1"/>
</dbReference>
<dbReference type="NCBIfam" id="NF003605">
    <property type="entry name" value="PRK05257.1-4"/>
    <property type="match status" value="1"/>
</dbReference>
<dbReference type="NCBIfam" id="NF003606">
    <property type="entry name" value="PRK05257.2-1"/>
    <property type="match status" value="1"/>
</dbReference>
<dbReference type="NCBIfam" id="NF003611">
    <property type="entry name" value="PRK05257.3-2"/>
    <property type="match status" value="1"/>
</dbReference>
<dbReference type="NCBIfam" id="NF009875">
    <property type="entry name" value="PRK13339.1"/>
    <property type="match status" value="1"/>
</dbReference>
<dbReference type="PANTHER" id="PTHR43104">
    <property type="entry name" value="L-2-HYDROXYGLUTARATE DEHYDROGENASE, MITOCHONDRIAL"/>
    <property type="match status" value="1"/>
</dbReference>
<dbReference type="PANTHER" id="PTHR43104:SF2">
    <property type="entry name" value="L-2-HYDROXYGLUTARATE DEHYDROGENASE, MITOCHONDRIAL"/>
    <property type="match status" value="1"/>
</dbReference>
<dbReference type="Pfam" id="PF06039">
    <property type="entry name" value="Mqo"/>
    <property type="match status" value="1"/>
</dbReference>
<dbReference type="SUPFAM" id="SSF51905">
    <property type="entry name" value="FAD/NAD(P)-binding domain"/>
    <property type="match status" value="1"/>
</dbReference>
<sequence length="492" mass="55032">MNTQHSKTDVILIGGGIMSATLGTLLKELTPEKDIQLFERLSQPGEESSNVWNNAGTGHSALCELNYTKEGKDGSVDITKAIHINEQFQISKQFWAYLIREGHIESPDKFIQSVPHMSFVKGEENVKFLKSRVASLQKNVLFEKMKISQDPEKINSWVPLMMEGRQSDEAIAITYDETGTDVNFGALTKKLIANLQQKNVGINYKHEVLDIKKLNNGNWQVVVKDLNTSNVMNYESKFVFIGAGGASLPLLQKTKIKESKHIGGFPVSGLFLRCKNPDVIHRHHAKVYGKAEVGAPPMSVPHLDTRFVNGEKSLLFGPFAGFSPKFLKNGSYLDLVKSVKPNNMITMLSAGVKEFNLTKYLVSQLMLSNEERINDLRVFLPEAKDEDWEVITAGQRVQVIKDTDKSKGQLQFGTEVITSEDGSLAALLGASPGASTAVDIMFDVLQRCYKSEFKSWEPKIKEMVPSFGLKLSEHEDMYHSINEEVKKYLNVK</sequence>
<accession>Q5HLN0</accession>
<protein>
    <recommendedName>
        <fullName evidence="1">Probable malate:quinone oxidoreductase 1</fullName>
        <ecNumber evidence="1">1.1.5.4</ecNumber>
    </recommendedName>
    <alternativeName>
        <fullName evidence="1">MQO 1</fullName>
    </alternativeName>
    <alternativeName>
        <fullName evidence="1">Malate dehydrogenase [quinone] 1</fullName>
    </alternativeName>
</protein>
<proteinExistence type="inferred from homology"/>
<name>MQO1_STAEQ</name>
<organism>
    <name type="scientific">Staphylococcus epidermidis (strain ATCC 35984 / DSM 28319 / BCRC 17069 / CCUG 31568 / BM 3577 / RP62A)</name>
    <dbReference type="NCBI Taxonomy" id="176279"/>
    <lineage>
        <taxon>Bacteria</taxon>
        <taxon>Bacillati</taxon>
        <taxon>Bacillota</taxon>
        <taxon>Bacilli</taxon>
        <taxon>Bacillales</taxon>
        <taxon>Staphylococcaceae</taxon>
        <taxon>Staphylococcus</taxon>
    </lineage>
</organism>
<reference key="1">
    <citation type="journal article" date="2005" name="J. Bacteriol.">
        <title>Insights on evolution of virulence and resistance from the complete genome analysis of an early methicillin-resistant Staphylococcus aureus strain and a biofilm-producing methicillin-resistant Staphylococcus epidermidis strain.</title>
        <authorList>
            <person name="Gill S.R."/>
            <person name="Fouts D.E."/>
            <person name="Archer G.L."/>
            <person name="Mongodin E.F."/>
            <person name="DeBoy R.T."/>
            <person name="Ravel J."/>
            <person name="Paulsen I.T."/>
            <person name="Kolonay J.F."/>
            <person name="Brinkac L.M."/>
            <person name="Beanan M.J."/>
            <person name="Dodson R.J."/>
            <person name="Daugherty S.C."/>
            <person name="Madupu R."/>
            <person name="Angiuoli S.V."/>
            <person name="Durkin A.S."/>
            <person name="Haft D.H."/>
            <person name="Vamathevan J.J."/>
            <person name="Khouri H."/>
            <person name="Utterback T.R."/>
            <person name="Lee C."/>
            <person name="Dimitrov G."/>
            <person name="Jiang L."/>
            <person name="Qin H."/>
            <person name="Weidman J."/>
            <person name="Tran K."/>
            <person name="Kang K.H."/>
            <person name="Hance I.R."/>
            <person name="Nelson K.E."/>
            <person name="Fraser C.M."/>
        </authorList>
    </citation>
    <scope>NUCLEOTIDE SEQUENCE [LARGE SCALE GENOMIC DNA]</scope>
    <source>
        <strain>ATCC 35984 / DSM 28319 / BCRC 17069 / CCUG 31568 / BM 3577 / RP62A</strain>
    </source>
</reference>
<comment type="catalytic activity">
    <reaction evidence="1">
        <text>(S)-malate + a quinone = a quinol + oxaloacetate</text>
        <dbReference type="Rhea" id="RHEA:46012"/>
        <dbReference type="ChEBI" id="CHEBI:15589"/>
        <dbReference type="ChEBI" id="CHEBI:16452"/>
        <dbReference type="ChEBI" id="CHEBI:24646"/>
        <dbReference type="ChEBI" id="CHEBI:132124"/>
        <dbReference type="EC" id="1.1.5.4"/>
    </reaction>
</comment>
<comment type="cofactor">
    <cofactor evidence="1">
        <name>FAD</name>
        <dbReference type="ChEBI" id="CHEBI:57692"/>
    </cofactor>
</comment>
<comment type="pathway">
    <text evidence="1">Carbohydrate metabolism; tricarboxylic acid cycle; oxaloacetate from (S)-malate (quinone route): step 1/1.</text>
</comment>
<comment type="similarity">
    <text evidence="1">Belongs to the MQO family.</text>
</comment>
<feature type="chain" id="PRO_0000128753" description="Probable malate:quinone oxidoreductase 1">
    <location>
        <begin position="1"/>
        <end position="492"/>
    </location>
</feature>
<gene>
    <name evidence="1" type="primary">mqo1</name>
    <name type="ordered locus">SERP1955</name>
</gene>
<evidence type="ECO:0000255" key="1">
    <source>
        <dbReference type="HAMAP-Rule" id="MF_00212"/>
    </source>
</evidence>
<keyword id="KW-0274">FAD</keyword>
<keyword id="KW-0285">Flavoprotein</keyword>
<keyword id="KW-0560">Oxidoreductase</keyword>
<keyword id="KW-1185">Reference proteome</keyword>
<keyword id="KW-0816">Tricarboxylic acid cycle</keyword>